<gene>
    <name type="primary">etfA</name>
    <name type="ordered locus">Tthe_1658</name>
</gene>
<protein>
    <recommendedName>
        <fullName>Electron transfer flavoprotein subunit alpha</fullName>
        <shortName>Alpha-ETF</shortName>
    </recommendedName>
    <alternativeName>
        <fullName>Electron transfer flavoprotein large subunit</fullName>
        <shortName>ETFLS</shortName>
    </alternativeName>
</protein>
<evidence type="ECO:0000250" key="1"/>
<evidence type="ECO:0000255" key="2"/>
<evidence type="ECO:0000305" key="3"/>
<name>ETFA_THETC</name>
<organism>
    <name type="scientific">Thermoanaerobacterium thermosaccharolyticum (strain ATCC 7956 / DSM 571 / NCIMB 9385 / NCA 3814 / NCTC 13789 / WDCM 00135 / 2032)</name>
    <name type="common">Clostridium thermosaccharolyticum</name>
    <dbReference type="NCBI Taxonomy" id="580327"/>
    <lineage>
        <taxon>Bacteria</taxon>
        <taxon>Bacillati</taxon>
        <taxon>Bacillota</taxon>
        <taxon>Clostridia</taxon>
        <taxon>Thermoanaerobacterales</taxon>
        <taxon>Thermoanaerobacteraceae</taxon>
        <taxon>Thermoanaerobacterium</taxon>
    </lineage>
</organism>
<comment type="function">
    <text evidence="1">The electron transfer flavoprotein serves as a specific electron acceptor for other dehydrogenases. It transfers the electrons to the main respiratory chain via ETF-ubiquinone oxidoreductase (ETF dehydrogenase) (By similarity).</text>
</comment>
<comment type="cofactor">
    <cofactor evidence="1">
        <name>FAD</name>
        <dbReference type="ChEBI" id="CHEBI:57692"/>
    </cofactor>
    <text evidence="1">Binds 1 FAD per dimer.</text>
</comment>
<comment type="subunit">
    <text>Heterodimer of an alpha and a beta subunit.</text>
</comment>
<comment type="similarity">
    <text evidence="3">Belongs to the ETF alpha-subunit/FixB family.</text>
</comment>
<keyword id="KW-0249">Electron transport</keyword>
<keyword id="KW-0274">FAD</keyword>
<keyword id="KW-0285">Flavoprotein</keyword>
<keyword id="KW-1185">Reference proteome</keyword>
<keyword id="KW-0813">Transport</keyword>
<feature type="chain" id="PRO_0000167849" description="Electron transfer flavoprotein subunit alpha">
    <location>
        <begin position="1"/>
        <end position="330"/>
    </location>
</feature>
<feature type="binding site" evidence="2">
    <location>
        <begin position="270"/>
        <end position="298"/>
    </location>
    <ligand>
        <name>FAD</name>
        <dbReference type="ChEBI" id="CHEBI:57692"/>
    </ligand>
</feature>
<feature type="sequence conflict" description="In Ref. 1; CAB04791/CAB07498." evidence="3" ref="1">
    <original>MKRAIRDDTRD</original>
    <variation>IKELLEMIQEM</variation>
    <location>
        <begin position="166"/>
        <end position="176"/>
    </location>
</feature>
<feature type="sequence conflict" description="In Ref. 1; CAB04791/CAB07498." evidence="3" ref="1">
    <original>L</original>
    <variation>R</variation>
    <location>
        <position position="237"/>
    </location>
</feature>
<sequence length="330" mass="35555">MNDYKDIWIFAEQRNGKLMNVAIEILGEARKLADKKGVNVGAVLIGHNVENLSKDLISFGADIVYVVDNPLLSNYTTEGYAKAISELAKEYKPEVILYGATFIGRDLAPRIASRLMTGLTADCTGLDIDENGLLLQTRPAFGGNLMATIKCPDKRPQMSTVRPGVMKRAIRDDTRDGKVIKFDADINESDIRTKILSIAKEAKNVVNLEEADIIVSGGRGIGGPDGFNIIKELADVLGGVVGASRATVDAGWITSDHQVGQTGKTVRPKLYIACGISGAIQHLAGMSNSGTIVAINKNPDAPIFKFADYGIVGDLFKVIPVLIEEIKKLK</sequence>
<reference key="1">
    <citation type="submission" date="1997-03" db="EMBL/GenBank/DDBJ databases">
        <authorList>
            <person name="van Rinsum A."/>
            <person name="Bronnenmeier K."/>
            <person name="Staudenbauer W.L."/>
        </authorList>
    </citation>
    <scope>NUCLEOTIDE SEQUENCE [GENOMIC DNA]</scope>
    <source>
        <strain>ATCC 7956 / DSM 571 / NCIMB 9385 / NCA 3814 / NCTC 13789 / WDCM 00135 / 2032</strain>
    </source>
</reference>
<reference key="2">
    <citation type="submission" date="2010-08" db="EMBL/GenBank/DDBJ databases">
        <title>Complete sequence of Thermoanaerobacterium thermosaccharolyticum DSM 571.</title>
        <authorList>
            <consortium name="US DOE Joint Genome Institute"/>
            <person name="Lucas S."/>
            <person name="Copeland A."/>
            <person name="Lapidus A."/>
            <person name="Cheng J.-F."/>
            <person name="Bruce D."/>
            <person name="Goodwin L."/>
            <person name="Pitluck S."/>
            <person name="Teshima H."/>
            <person name="Detter J.C."/>
            <person name="Han C."/>
            <person name="Tapia R."/>
            <person name="Land M."/>
            <person name="Hauser L."/>
            <person name="Chang Y.-J."/>
            <person name="Jeffries C."/>
            <person name="Kyrpides N."/>
            <person name="Ivanova N."/>
            <person name="Mikhailova N."/>
            <person name="Hemme C.L."/>
            <person name="Woyke T."/>
        </authorList>
    </citation>
    <scope>NUCLEOTIDE SEQUENCE [LARGE SCALE GENOMIC DNA]</scope>
    <source>
        <strain>ATCC 7956 / DSM 571 / NCIMB 9385 / NCA 3814 / NCTC 13789 / WDCM 00135 / 2032</strain>
    </source>
</reference>
<accession>P71153</accession>
<accession>D9TPZ8</accession>
<accession>O08252</accession>
<dbReference type="EMBL" id="Z82038">
    <property type="protein sequence ID" value="CAB04791.1"/>
    <property type="molecule type" value="Genomic_DNA"/>
</dbReference>
<dbReference type="EMBL" id="Z92974">
    <property type="protein sequence ID" value="CAB07498.1"/>
    <property type="molecule type" value="Genomic_DNA"/>
</dbReference>
<dbReference type="EMBL" id="CP002171">
    <property type="protein sequence ID" value="ADL69167.1"/>
    <property type="molecule type" value="Genomic_DNA"/>
</dbReference>
<dbReference type="PIR" id="T45288">
    <property type="entry name" value="T45288"/>
</dbReference>
<dbReference type="RefSeq" id="WP_013298134.1">
    <property type="nucleotide sequence ID" value="NC_014410.1"/>
</dbReference>
<dbReference type="SMR" id="P71153"/>
<dbReference type="STRING" id="580327.Tthe_1658"/>
<dbReference type="GeneID" id="93864494"/>
<dbReference type="KEGG" id="ttm:Tthe_1658"/>
<dbReference type="eggNOG" id="COG2025">
    <property type="taxonomic scope" value="Bacteria"/>
</dbReference>
<dbReference type="HOGENOM" id="CLU_034178_1_1_9"/>
<dbReference type="OrthoDB" id="9770286at2"/>
<dbReference type="Proteomes" id="UP000001626">
    <property type="component" value="Chromosome"/>
</dbReference>
<dbReference type="GO" id="GO:0009055">
    <property type="term" value="F:electron transfer activity"/>
    <property type="evidence" value="ECO:0007669"/>
    <property type="project" value="InterPro"/>
</dbReference>
<dbReference type="GO" id="GO:0050660">
    <property type="term" value="F:flavin adenine dinucleotide binding"/>
    <property type="evidence" value="ECO:0007669"/>
    <property type="project" value="InterPro"/>
</dbReference>
<dbReference type="GO" id="GO:0033539">
    <property type="term" value="P:fatty acid beta-oxidation using acyl-CoA dehydrogenase"/>
    <property type="evidence" value="ECO:0007669"/>
    <property type="project" value="TreeGrafter"/>
</dbReference>
<dbReference type="CDD" id="cd01715">
    <property type="entry name" value="ETF_alpha"/>
    <property type="match status" value="1"/>
</dbReference>
<dbReference type="FunFam" id="3.40.50.1220:FF:000001">
    <property type="entry name" value="Electron transfer flavoprotein, alpha subunit"/>
    <property type="match status" value="1"/>
</dbReference>
<dbReference type="Gene3D" id="3.40.50.620">
    <property type="entry name" value="HUPs"/>
    <property type="match status" value="1"/>
</dbReference>
<dbReference type="Gene3D" id="3.40.50.1220">
    <property type="entry name" value="TPP-binding domain"/>
    <property type="match status" value="1"/>
</dbReference>
<dbReference type="InterPro" id="IPR029035">
    <property type="entry name" value="DHS-like_NAD/FAD-binding_dom"/>
</dbReference>
<dbReference type="InterPro" id="IPR014730">
    <property type="entry name" value="ETF_a/b_N"/>
</dbReference>
<dbReference type="InterPro" id="IPR001308">
    <property type="entry name" value="ETF_a/FixB"/>
</dbReference>
<dbReference type="InterPro" id="IPR033947">
    <property type="entry name" value="ETF_alpha_N"/>
</dbReference>
<dbReference type="InterPro" id="IPR014731">
    <property type="entry name" value="ETF_asu_C"/>
</dbReference>
<dbReference type="InterPro" id="IPR018206">
    <property type="entry name" value="ETF_asu_C_CS"/>
</dbReference>
<dbReference type="InterPro" id="IPR014729">
    <property type="entry name" value="Rossmann-like_a/b/a_fold"/>
</dbReference>
<dbReference type="PANTHER" id="PTHR43153">
    <property type="entry name" value="ELECTRON TRANSFER FLAVOPROTEIN ALPHA"/>
    <property type="match status" value="1"/>
</dbReference>
<dbReference type="PANTHER" id="PTHR43153:SF1">
    <property type="entry name" value="ELECTRON TRANSFER FLAVOPROTEIN SUBUNIT ALPHA, MITOCHONDRIAL"/>
    <property type="match status" value="1"/>
</dbReference>
<dbReference type="Pfam" id="PF01012">
    <property type="entry name" value="ETF"/>
    <property type="match status" value="1"/>
</dbReference>
<dbReference type="Pfam" id="PF00766">
    <property type="entry name" value="ETF_alpha"/>
    <property type="match status" value="1"/>
</dbReference>
<dbReference type="PIRSF" id="PIRSF000089">
    <property type="entry name" value="Electra_flavoP_a"/>
    <property type="match status" value="1"/>
</dbReference>
<dbReference type="SMART" id="SM00893">
    <property type="entry name" value="ETF"/>
    <property type="match status" value="1"/>
</dbReference>
<dbReference type="SUPFAM" id="SSF52402">
    <property type="entry name" value="Adenine nucleotide alpha hydrolases-like"/>
    <property type="match status" value="1"/>
</dbReference>
<dbReference type="SUPFAM" id="SSF52467">
    <property type="entry name" value="DHS-like NAD/FAD-binding domain"/>
    <property type="match status" value="1"/>
</dbReference>
<dbReference type="PROSITE" id="PS00696">
    <property type="entry name" value="ETF_ALPHA"/>
    <property type="match status" value="1"/>
</dbReference>
<proteinExistence type="inferred from homology"/>